<gene>
    <name evidence="1" type="primary">rpsO</name>
    <name type="ordered locus">AZC_0064</name>
</gene>
<organism>
    <name type="scientific">Azorhizobium caulinodans (strain ATCC 43989 / DSM 5975 / JCM 20966 / LMG 6465 / NBRC 14845 / NCIMB 13405 / ORS 571)</name>
    <dbReference type="NCBI Taxonomy" id="438753"/>
    <lineage>
        <taxon>Bacteria</taxon>
        <taxon>Pseudomonadati</taxon>
        <taxon>Pseudomonadota</taxon>
        <taxon>Alphaproteobacteria</taxon>
        <taxon>Hyphomicrobiales</taxon>
        <taxon>Xanthobacteraceae</taxon>
        <taxon>Azorhizobium</taxon>
    </lineage>
</organism>
<keyword id="KW-1185">Reference proteome</keyword>
<keyword id="KW-0687">Ribonucleoprotein</keyword>
<keyword id="KW-0689">Ribosomal protein</keyword>
<keyword id="KW-0694">RNA-binding</keyword>
<keyword id="KW-0699">rRNA-binding</keyword>
<name>RS15_AZOC5</name>
<proteinExistence type="inferred from homology"/>
<dbReference type="EMBL" id="AP009384">
    <property type="protein sequence ID" value="BAF86062.1"/>
    <property type="molecule type" value="Genomic_DNA"/>
</dbReference>
<dbReference type="RefSeq" id="WP_012168595.1">
    <property type="nucleotide sequence ID" value="NC_009937.1"/>
</dbReference>
<dbReference type="SMR" id="A8IGA5"/>
<dbReference type="STRING" id="438753.AZC_0064"/>
<dbReference type="KEGG" id="azc:AZC_0064"/>
<dbReference type="eggNOG" id="COG0184">
    <property type="taxonomic scope" value="Bacteria"/>
</dbReference>
<dbReference type="HOGENOM" id="CLU_148518_0_0_5"/>
<dbReference type="Proteomes" id="UP000000270">
    <property type="component" value="Chromosome"/>
</dbReference>
<dbReference type="GO" id="GO:0022627">
    <property type="term" value="C:cytosolic small ribosomal subunit"/>
    <property type="evidence" value="ECO:0007669"/>
    <property type="project" value="TreeGrafter"/>
</dbReference>
<dbReference type="GO" id="GO:0019843">
    <property type="term" value="F:rRNA binding"/>
    <property type="evidence" value="ECO:0007669"/>
    <property type="project" value="UniProtKB-UniRule"/>
</dbReference>
<dbReference type="GO" id="GO:0003735">
    <property type="term" value="F:structural constituent of ribosome"/>
    <property type="evidence" value="ECO:0007669"/>
    <property type="project" value="InterPro"/>
</dbReference>
<dbReference type="GO" id="GO:0006412">
    <property type="term" value="P:translation"/>
    <property type="evidence" value="ECO:0007669"/>
    <property type="project" value="UniProtKB-UniRule"/>
</dbReference>
<dbReference type="CDD" id="cd00353">
    <property type="entry name" value="Ribosomal_S15p_S13e"/>
    <property type="match status" value="1"/>
</dbReference>
<dbReference type="FunFam" id="1.10.287.10:FF:000002">
    <property type="entry name" value="30S ribosomal protein S15"/>
    <property type="match status" value="1"/>
</dbReference>
<dbReference type="Gene3D" id="6.10.250.3130">
    <property type="match status" value="1"/>
</dbReference>
<dbReference type="Gene3D" id="1.10.287.10">
    <property type="entry name" value="S15/NS1, RNA-binding"/>
    <property type="match status" value="1"/>
</dbReference>
<dbReference type="HAMAP" id="MF_01343_B">
    <property type="entry name" value="Ribosomal_uS15_B"/>
    <property type="match status" value="1"/>
</dbReference>
<dbReference type="InterPro" id="IPR000589">
    <property type="entry name" value="Ribosomal_uS15"/>
</dbReference>
<dbReference type="InterPro" id="IPR005290">
    <property type="entry name" value="Ribosomal_uS15_bac-type"/>
</dbReference>
<dbReference type="InterPro" id="IPR009068">
    <property type="entry name" value="uS15_NS1_RNA-bd_sf"/>
</dbReference>
<dbReference type="NCBIfam" id="TIGR00952">
    <property type="entry name" value="S15_bact"/>
    <property type="match status" value="1"/>
</dbReference>
<dbReference type="PANTHER" id="PTHR23321">
    <property type="entry name" value="RIBOSOMAL PROTEIN S15, BACTERIAL AND ORGANELLAR"/>
    <property type="match status" value="1"/>
</dbReference>
<dbReference type="PANTHER" id="PTHR23321:SF26">
    <property type="entry name" value="SMALL RIBOSOMAL SUBUNIT PROTEIN US15M"/>
    <property type="match status" value="1"/>
</dbReference>
<dbReference type="Pfam" id="PF00312">
    <property type="entry name" value="Ribosomal_S15"/>
    <property type="match status" value="1"/>
</dbReference>
<dbReference type="SMART" id="SM01387">
    <property type="entry name" value="Ribosomal_S15"/>
    <property type="match status" value="1"/>
</dbReference>
<dbReference type="SUPFAM" id="SSF47060">
    <property type="entry name" value="S15/NS1 RNA-binding domain"/>
    <property type="match status" value="1"/>
</dbReference>
<dbReference type="PROSITE" id="PS00362">
    <property type="entry name" value="RIBOSOMAL_S15"/>
    <property type="match status" value="1"/>
</dbReference>
<reference key="1">
    <citation type="submission" date="2007-04" db="EMBL/GenBank/DDBJ databases">
        <title>Complete genome sequence of the nitrogen-fixing bacterium Azorhizobium caulinodans ORS571.</title>
        <authorList>
            <person name="Lee K.B."/>
            <person name="Backer P.D."/>
            <person name="Aono T."/>
            <person name="Liu C.T."/>
            <person name="Suzuki S."/>
            <person name="Suzuki T."/>
            <person name="Kaneko T."/>
            <person name="Yamada M."/>
            <person name="Tabata S."/>
            <person name="Kupfer D.M."/>
            <person name="Najar F.Z."/>
            <person name="Wiley G.B."/>
            <person name="Roe B."/>
            <person name="Binnewies T."/>
            <person name="Ussery D."/>
            <person name="Vereecke D."/>
            <person name="Gevers D."/>
            <person name="Holsters M."/>
            <person name="Oyaizu H."/>
        </authorList>
    </citation>
    <scope>NUCLEOTIDE SEQUENCE [LARGE SCALE GENOMIC DNA]</scope>
    <source>
        <strain>ATCC 43989 / DSM 5975 / JCM 20966 / LMG 6465 / NBRC 14845 / NCIMB 13405 / ORS 571</strain>
    </source>
</reference>
<comment type="function">
    <text evidence="1">One of the primary rRNA binding proteins, it binds directly to 16S rRNA where it helps nucleate assembly of the platform of the 30S subunit by binding and bridging several RNA helices of the 16S rRNA.</text>
</comment>
<comment type="function">
    <text evidence="1">Forms an intersubunit bridge (bridge B4) with the 23S rRNA of the 50S subunit in the ribosome.</text>
</comment>
<comment type="subunit">
    <text evidence="1">Part of the 30S ribosomal subunit. Forms a bridge to the 50S subunit in the 70S ribosome, contacting the 23S rRNA.</text>
</comment>
<comment type="similarity">
    <text evidence="1">Belongs to the universal ribosomal protein uS15 family.</text>
</comment>
<sequence>MSITPERKQALISEYGAKAGDTGSPEVQVAILSERISNLTEHFKSHNKDNHSRRGLLKLVSQRRSLLDYLKKKDEGRYKTLIGRLGLRR</sequence>
<feature type="chain" id="PRO_1000073333" description="Small ribosomal subunit protein uS15">
    <location>
        <begin position="1"/>
        <end position="89"/>
    </location>
</feature>
<accession>A8IGA5</accession>
<evidence type="ECO:0000255" key="1">
    <source>
        <dbReference type="HAMAP-Rule" id="MF_01343"/>
    </source>
</evidence>
<evidence type="ECO:0000305" key="2"/>
<protein>
    <recommendedName>
        <fullName evidence="1">Small ribosomal subunit protein uS15</fullName>
    </recommendedName>
    <alternativeName>
        <fullName evidence="2">30S ribosomal protein S15</fullName>
    </alternativeName>
</protein>